<comment type="function">
    <text>Bifunctional enzyme which can phosphorylate or dephosphorylate isocitrate dehydrogenase (IDH) on a specific serine residue. This is a regulatory mechanism which enables bacteria to bypass the Krebs cycle via the glyoxylate shunt in response to the source of carbon. When bacteria are grown on glucose, IDH is fully active and unphosphorylated, but when grown on acetate or ethanol, the activity of IDH declines drastically concomitant with its phosphorylation.</text>
</comment>
<comment type="catalytic activity">
    <reaction evidence="1">
        <text>L-seryl-[isocitrate dehydrogenase] + ATP = O-phospho-L-seryl-[isocitrate dehydrogenase] + ADP + H(+)</text>
        <dbReference type="Rhea" id="RHEA:43540"/>
        <dbReference type="Rhea" id="RHEA-COMP:10605"/>
        <dbReference type="Rhea" id="RHEA-COMP:10606"/>
        <dbReference type="ChEBI" id="CHEBI:15378"/>
        <dbReference type="ChEBI" id="CHEBI:29999"/>
        <dbReference type="ChEBI" id="CHEBI:30616"/>
        <dbReference type="ChEBI" id="CHEBI:83421"/>
        <dbReference type="ChEBI" id="CHEBI:456216"/>
        <dbReference type="EC" id="2.7.11.5"/>
    </reaction>
</comment>
<comment type="interaction">
    <interactant intactId="EBI-1112800">
        <id>P11071</id>
    </interactant>
    <interactant intactId="EBI-369069">
        <id>P08200</id>
        <label>icd</label>
    </interactant>
    <organismsDiffer>false</organismsDiffer>
    <experiments>5</experiments>
</comment>
<comment type="subcellular location">
    <subcellularLocation>
        <location>Cytoplasm</location>
    </subcellularLocation>
</comment>
<comment type="similarity">
    <text evidence="1">Belongs to the AceK family.</text>
</comment>
<comment type="sequence caution" evidence="4">
    <conflict type="frameshift">
        <sequence resource="EMBL-CDS" id="AAA24007"/>
    </conflict>
</comment>
<gene>
    <name evidence="1" type="primary">aceK</name>
    <name type="ordered locus">b4016</name>
    <name type="ordered locus">JW3976</name>
</gene>
<organism>
    <name type="scientific">Escherichia coli (strain K12)</name>
    <dbReference type="NCBI Taxonomy" id="83333"/>
    <lineage>
        <taxon>Bacteria</taxon>
        <taxon>Pseudomonadati</taxon>
        <taxon>Pseudomonadota</taxon>
        <taxon>Gammaproteobacteria</taxon>
        <taxon>Enterobacterales</taxon>
        <taxon>Enterobacteriaceae</taxon>
        <taxon>Escherichia</taxon>
    </lineage>
</organism>
<proteinExistence type="evidence at protein level"/>
<accession>P11071</accession>
<accession>P11070</accession>
<accession>Q2M6T8</accession>
<protein>
    <recommendedName>
        <fullName evidence="1">Isocitrate dehydrogenase kinase/phosphatase</fullName>
        <shortName evidence="1">IDH kinase/phosphatase</shortName>
        <shortName evidence="1">IDHK/P</shortName>
        <ecNumber evidence="1">2.7.11.5</ecNumber>
        <ecNumber evidence="1">3.1.3.-</ecNumber>
    </recommendedName>
</protein>
<sequence>MPRGLELLIAQTILQGFDAQYGRFLEVTSGAQQRFEQADWHAVQQAMKNRIHLYDHHVGLVVEQLRCITNGQSTDAAFLLRVKEHYTRLLPDYPRFEIAESFFNSVYCRLFDHRSLTPERLFIFSSQPERRFRTIPRPLAKDFHPDHGWESLLMRVISDLPLRLRWQNKSRDIHYIIRHLTETLGTDNLAESHLQVANELFYRNKAAWLVGKLITPSGTLPFLLPIHQTDDGELFIDTCLTTTAEASIVFGFARSYFMVYAPLPAALVEWLREILPGKTTAELYMAIGCQKHAKTESYREYLVYLQGCNEQFIEAPGIRGMVMLVFTLPGFDRVFKVIKDRFAPQKEMSAAHVRACYQLVKEHDRVGRMADTQEFENFVLEKRHISPALMELLLQEAAEKITDLGEQIVIRHLYIERRMVPLNIWLEQVEGQQLRDAIEEYGNAIRQLAAANIFPGDMLFKNFGVTRHGRVVFYDYDEICYMTEVNFRDIPPPRYPEDELASEPWYSVSPGDVFPEEFRHWLCADPRIGPLFEEMHADLFRADYWRALQNRIREGHVEDVYAYRRRQRFSVRYGEMLF</sequence>
<evidence type="ECO:0000255" key="1">
    <source>
        <dbReference type="HAMAP-Rule" id="MF_00747"/>
    </source>
</evidence>
<evidence type="ECO:0000269" key="2">
    <source>
    </source>
</evidence>
<evidence type="ECO:0000269" key="3">
    <source>
    </source>
</evidence>
<evidence type="ECO:0000305" key="4"/>
<evidence type="ECO:0007829" key="5">
    <source>
        <dbReference type="PDB" id="6K5L"/>
    </source>
</evidence>
<name>ACEK_ECOLI</name>
<feature type="chain" id="PRO_0000057898" description="Isocitrate dehydrogenase kinase/phosphatase">
    <location>
        <begin position="1"/>
        <end position="578"/>
    </location>
</feature>
<feature type="active site" evidence="4">
    <location>
        <position position="371"/>
    </location>
</feature>
<feature type="binding site" evidence="1">
    <location>
        <begin position="315"/>
        <end position="321"/>
    </location>
    <ligand>
        <name>ATP</name>
        <dbReference type="ChEBI" id="CHEBI:30616"/>
    </ligand>
</feature>
<feature type="binding site" evidence="1">
    <location>
        <position position="336"/>
    </location>
    <ligand>
        <name>ATP</name>
        <dbReference type="ChEBI" id="CHEBI:30616"/>
    </ligand>
</feature>
<feature type="mutagenesis site" description="Inhibits enzyme." evidence="3">
    <original>K</original>
    <variation>M</variation>
    <location>
        <position position="336"/>
    </location>
</feature>
<feature type="mutagenesis site" description="Loss of activity." evidence="2">
    <original>D</original>
    <variation>A</variation>
    <variation>E</variation>
    <variation>Q</variation>
    <location>
        <position position="371"/>
    </location>
</feature>
<feature type="mutagenesis site" description="No loss of activity." evidence="2">
    <original>N</original>
    <variation>A</variation>
    <location>
        <position position="377"/>
    </location>
</feature>
<feature type="mutagenesis site" description="No loss of activity." evidence="2">
    <original>D</original>
    <variation>A</variation>
    <location>
        <position position="403"/>
    </location>
</feature>
<feature type="mutagenesis site" description="No loss of activity." evidence="2">
    <original>E</original>
    <variation>A</variation>
    <location>
        <position position="439"/>
    </location>
</feature>
<feature type="sequence conflict" description="In Ref. 2; AAA24007." evidence="4" ref="2">
    <original>A</original>
    <variation>G</variation>
    <location>
        <position position="140"/>
    </location>
</feature>
<feature type="sequence conflict" description="In Ref. 1; AAA24010." evidence="4" ref="1">
    <original>ER</original>
    <variation>DG</variation>
    <location>
        <begin position="416"/>
        <end position="417"/>
    </location>
</feature>
<feature type="helix" evidence="5">
    <location>
        <begin position="2"/>
        <end position="29"/>
    </location>
</feature>
<feature type="helix" evidence="5">
    <location>
        <begin position="31"/>
        <end position="36"/>
    </location>
</feature>
<feature type="helix" evidence="5">
    <location>
        <begin position="40"/>
        <end position="69"/>
    </location>
</feature>
<feature type="helix" evidence="5">
    <location>
        <begin position="72"/>
        <end position="74"/>
    </location>
</feature>
<feature type="helix" evidence="5">
    <location>
        <begin position="76"/>
        <end position="88"/>
    </location>
</feature>
<feature type="turn" evidence="5">
    <location>
        <begin position="89"/>
        <end position="92"/>
    </location>
</feature>
<feature type="helix" evidence="5">
    <location>
        <begin position="96"/>
        <end position="110"/>
    </location>
</feature>
<feature type="turn" evidence="5">
    <location>
        <begin position="111"/>
        <end position="113"/>
    </location>
</feature>
<feature type="turn" evidence="5">
    <location>
        <begin position="118"/>
        <end position="120"/>
    </location>
</feature>
<feature type="strand" evidence="5">
    <location>
        <begin position="139"/>
        <end position="143"/>
    </location>
</feature>
<feature type="turn" evidence="5">
    <location>
        <begin position="146"/>
        <end position="149"/>
    </location>
</feature>
<feature type="helix" evidence="5">
    <location>
        <begin position="150"/>
        <end position="159"/>
    </location>
</feature>
<feature type="strand" evidence="5">
    <location>
        <begin position="166"/>
        <end position="168"/>
    </location>
</feature>
<feature type="helix" evidence="5">
    <location>
        <begin position="169"/>
        <end position="184"/>
    </location>
</feature>
<feature type="helix" evidence="5">
    <location>
        <begin position="186"/>
        <end position="191"/>
    </location>
</feature>
<feature type="strand" evidence="5">
    <location>
        <begin position="193"/>
        <end position="199"/>
    </location>
</feature>
<feature type="strand" evidence="5">
    <location>
        <begin position="201"/>
        <end position="203"/>
    </location>
</feature>
<feature type="strand" evidence="5">
    <location>
        <begin position="206"/>
        <end position="215"/>
    </location>
</feature>
<feature type="strand" evidence="5">
    <location>
        <begin position="218"/>
        <end position="228"/>
    </location>
</feature>
<feature type="strand" evidence="5">
    <location>
        <begin position="230"/>
        <end position="232"/>
    </location>
</feature>
<feature type="strand" evidence="5">
    <location>
        <begin position="234"/>
        <end position="236"/>
    </location>
</feature>
<feature type="helix" evidence="5">
    <location>
        <begin position="243"/>
        <end position="249"/>
    </location>
</feature>
<feature type="helix" evidence="5">
    <location>
        <begin position="264"/>
        <end position="272"/>
    </location>
</feature>
<feature type="helix" evidence="5">
    <location>
        <begin position="280"/>
        <end position="286"/>
    </location>
</feature>
<feature type="helix" evidence="5">
    <location>
        <begin position="290"/>
        <end position="307"/>
    </location>
</feature>
<feature type="strand" evidence="5">
    <location>
        <begin position="312"/>
        <end position="314"/>
    </location>
</feature>
<feature type="strand" evidence="5">
    <location>
        <begin position="316"/>
        <end position="318"/>
    </location>
</feature>
<feature type="strand" evidence="5">
    <location>
        <begin position="321"/>
        <end position="327"/>
    </location>
</feature>
<feature type="strand" evidence="5">
    <location>
        <begin position="332"/>
        <end position="338"/>
    </location>
</feature>
<feature type="helix" evidence="5">
    <location>
        <begin position="350"/>
        <end position="361"/>
    </location>
</feature>
<feature type="strand" evidence="5">
    <location>
        <begin position="372"/>
        <end position="381"/>
    </location>
</feature>
<feature type="helix" evidence="5">
    <location>
        <begin position="382"/>
        <end position="384"/>
    </location>
</feature>
<feature type="helix" evidence="5">
    <location>
        <begin position="387"/>
        <end position="396"/>
    </location>
</feature>
<feature type="helix" evidence="5">
    <location>
        <begin position="398"/>
        <end position="400"/>
    </location>
</feature>
<feature type="strand" evidence="5">
    <location>
        <begin position="401"/>
        <end position="404"/>
    </location>
</feature>
<feature type="strand" evidence="5">
    <location>
        <begin position="407"/>
        <end position="417"/>
    </location>
</feature>
<feature type="helix" evidence="5">
    <location>
        <begin position="422"/>
        <end position="425"/>
    </location>
</feature>
<feature type="turn" evidence="5">
    <location>
        <begin position="426"/>
        <end position="428"/>
    </location>
</feature>
<feature type="helix" evidence="5">
    <location>
        <begin position="431"/>
        <end position="450"/>
    </location>
</feature>
<feature type="helix" evidence="5">
    <location>
        <begin position="460"/>
        <end position="462"/>
    </location>
</feature>
<feature type="strand" evidence="5">
    <location>
        <begin position="463"/>
        <end position="465"/>
    </location>
</feature>
<feature type="strand" evidence="5">
    <location>
        <begin position="471"/>
        <end position="473"/>
    </location>
</feature>
<feature type="helix" evidence="5">
    <location>
        <begin position="482"/>
        <end position="484"/>
    </location>
</feature>
<feature type="helix" evidence="5">
    <location>
        <begin position="515"/>
        <end position="517"/>
    </location>
</feature>
<feature type="helix" evidence="5">
    <location>
        <begin position="518"/>
        <end position="522"/>
    </location>
</feature>
<feature type="turn" evidence="5">
    <location>
        <begin position="526"/>
        <end position="528"/>
    </location>
</feature>
<feature type="helix" evidence="5">
    <location>
        <begin position="529"/>
        <end position="536"/>
    </location>
</feature>
<feature type="helix" evidence="5">
    <location>
        <begin position="537"/>
        <end position="540"/>
    </location>
</feature>
<feature type="helix" evidence="5">
    <location>
        <begin position="542"/>
        <end position="553"/>
    </location>
</feature>
<feature type="helix" evidence="5">
    <location>
        <begin position="565"/>
        <end position="567"/>
    </location>
</feature>
<feature type="helix" evidence="5">
    <location>
        <begin position="569"/>
        <end position="572"/>
    </location>
</feature>
<reference key="1">
    <citation type="journal article" date="1988" name="J. Bacteriol.">
        <title>Nucleotide sequence of aceK, the gene encoding isocitrate dehydrogenase kinase/phosphatase.</title>
        <authorList>
            <person name="Klumpp D.J."/>
            <person name="Plank D.W."/>
            <person name="Bowdin L.J."/>
            <person name="Stueland C.S."/>
            <person name="Chung T."/>
            <person name="Laporte D.C."/>
        </authorList>
    </citation>
    <scope>NUCLEOTIDE SEQUENCE [GENOMIC DNA]</scope>
    <scope>PARTIAL PROTEIN SEQUENCE</scope>
</reference>
<reference key="2">
    <citation type="journal article" date="1988" name="J. Bacteriol.">
        <title>Nucleotide sequence and expression of the aceK gene coding for isocitrate dehydrogenase kinase/phosphatase in Escherichia coli.</title>
        <authorList>
            <person name="Cortay J.-C."/>
            <person name="Bleicher F."/>
            <person name="Rieul C."/>
            <person name="Reeves H.C."/>
            <person name="Cozzone A.J."/>
        </authorList>
    </citation>
    <scope>NUCLEOTIDE SEQUENCE [GENOMIC DNA]</scope>
</reference>
<reference key="3">
    <citation type="journal article" date="1993" name="Nucleic Acids Res.">
        <title>Analysis of the Escherichia coli genome. IV. DNA sequence of the region from 89.2 to 92.8 minutes.</title>
        <authorList>
            <person name="Blattner F.R."/>
            <person name="Burland V.D."/>
            <person name="Plunkett G. III"/>
            <person name="Sofia H.J."/>
            <person name="Daniels D.L."/>
        </authorList>
    </citation>
    <scope>NUCLEOTIDE SEQUENCE [LARGE SCALE GENOMIC DNA]</scope>
    <source>
        <strain>K12 / MG1655 / ATCC 47076</strain>
    </source>
</reference>
<reference key="4">
    <citation type="journal article" date="1997" name="Science">
        <title>The complete genome sequence of Escherichia coli K-12.</title>
        <authorList>
            <person name="Blattner F.R."/>
            <person name="Plunkett G. III"/>
            <person name="Bloch C.A."/>
            <person name="Perna N.T."/>
            <person name="Burland V."/>
            <person name="Riley M."/>
            <person name="Collado-Vides J."/>
            <person name="Glasner J.D."/>
            <person name="Rode C.K."/>
            <person name="Mayhew G.F."/>
            <person name="Gregor J."/>
            <person name="Davis N.W."/>
            <person name="Kirkpatrick H.A."/>
            <person name="Goeden M.A."/>
            <person name="Rose D.J."/>
            <person name="Mau B."/>
            <person name="Shao Y."/>
        </authorList>
    </citation>
    <scope>NUCLEOTIDE SEQUENCE [LARGE SCALE GENOMIC DNA]</scope>
    <source>
        <strain>K12 / MG1655 / ATCC 47076</strain>
    </source>
</reference>
<reference key="5">
    <citation type="journal article" date="2006" name="Mol. Syst. Biol.">
        <title>Highly accurate genome sequences of Escherichia coli K-12 strains MG1655 and W3110.</title>
        <authorList>
            <person name="Hayashi K."/>
            <person name="Morooka N."/>
            <person name="Yamamoto Y."/>
            <person name="Fujita K."/>
            <person name="Isono K."/>
            <person name="Choi S."/>
            <person name="Ohtsubo E."/>
            <person name="Baba T."/>
            <person name="Wanner B.L."/>
            <person name="Mori H."/>
            <person name="Horiuchi T."/>
        </authorList>
    </citation>
    <scope>NUCLEOTIDE SEQUENCE [LARGE SCALE GENOMIC DNA]</scope>
    <source>
        <strain>K12 / W3110 / ATCC 27325 / DSM 5911</strain>
    </source>
</reference>
<reference key="6">
    <citation type="journal article" date="1988" name="J. Bacteriol.">
        <title>Isolation, hyperexpression, and sequencing of the aceA gene encoding isocitrate lyase in Escherichia coli.</title>
        <authorList>
            <person name="Matsuoka M."/>
            <person name="McFadden B.A."/>
        </authorList>
    </citation>
    <scope>NUCLEOTIDE SEQUENCE [GENOMIC DNA] OF 1-55</scope>
</reference>
<reference key="7">
    <citation type="journal article" date="1991" name="Gene">
        <title>Primary structure of the intergenic region between aceK and iclR in the Escherichia coli chromosome.</title>
        <authorList>
            <person name="Galinier A."/>
            <person name="Bleicher F."/>
            <person name="Negre D."/>
            <person name="Perriere G."/>
            <person name="Duclos B."/>
            <person name="Cozzone A.J."/>
            <person name="Cortay J.-C."/>
        </authorList>
    </citation>
    <scope>NUCLEOTIDE SEQUENCE [GENOMIC DNA] OF 552-578</scope>
</reference>
<reference key="8">
    <citation type="journal article" date="1989" name="Biochimie">
        <title>Isocitrate dehydrogenase kinase/phosphatase.</title>
        <authorList>
            <person name="Laporte D.C."/>
            <person name="Stueland C.S."/>
            <person name="Ikeda T.P."/>
        </authorList>
    </citation>
    <scope>REVIEW</scope>
    <scope>MUTAGENESIS OF LYS-336</scope>
</reference>
<reference key="9">
    <citation type="journal article" date="2001" name="Biochemistry">
        <title>The 'catalytic' triad of isocitrate dehydrogenase kinase/phosphatase from E. coli and its relationship with that found in eukaryotic protein kinases.</title>
        <authorList>
            <person name="Oudot C."/>
            <person name="Cortay J.-C."/>
            <person name="Blanchet C."/>
            <person name="Laporte D.C."/>
            <person name="Di Pietro A."/>
            <person name="Cozzone A.J."/>
            <person name="Jault J.-M."/>
        </authorList>
    </citation>
    <scope>MUTAGENESIS OF ASP-371; ASN-377; ASP-403 AND GLU-439</scope>
</reference>
<keyword id="KW-0002">3D-structure</keyword>
<keyword id="KW-0067">ATP-binding</keyword>
<keyword id="KW-0963">Cytoplasm</keyword>
<keyword id="KW-0903">Direct protein sequencing</keyword>
<keyword id="KW-0329">Glyoxylate bypass</keyword>
<keyword id="KW-0378">Hydrolase</keyword>
<keyword id="KW-0418">Kinase</keyword>
<keyword id="KW-0547">Nucleotide-binding</keyword>
<keyword id="KW-0904">Protein phosphatase</keyword>
<keyword id="KW-1185">Reference proteome</keyword>
<keyword id="KW-0723">Serine/threonine-protein kinase</keyword>
<keyword id="KW-0808">Transferase</keyword>
<keyword id="KW-0816">Tricarboxylic acid cycle</keyword>
<dbReference type="EC" id="2.7.11.5" evidence="1"/>
<dbReference type="EC" id="3.1.3.-" evidence="1"/>
<dbReference type="EMBL" id="M20714">
    <property type="protein sequence ID" value="AAA24010.1"/>
    <property type="molecule type" value="Genomic_DNA"/>
</dbReference>
<dbReference type="EMBL" id="M18974">
    <property type="protein sequence ID" value="AAA24007.1"/>
    <property type="status" value="ALT_FRAME"/>
    <property type="molecule type" value="Genomic_DNA"/>
</dbReference>
<dbReference type="EMBL" id="U00006">
    <property type="protein sequence ID" value="AAC43110.1"/>
    <property type="molecule type" value="Genomic_DNA"/>
</dbReference>
<dbReference type="EMBL" id="U00096">
    <property type="protein sequence ID" value="AAC76986.1"/>
    <property type="molecule type" value="Genomic_DNA"/>
</dbReference>
<dbReference type="EMBL" id="AP009048">
    <property type="protein sequence ID" value="BAE78018.1"/>
    <property type="molecule type" value="Genomic_DNA"/>
</dbReference>
<dbReference type="EMBL" id="M22621">
    <property type="protein sequence ID" value="AAC13651.1"/>
    <property type="molecule type" value="Genomic_DNA"/>
</dbReference>
<dbReference type="EMBL" id="M63497">
    <property type="protein sequence ID" value="AAA73005.1"/>
    <property type="molecule type" value="Genomic_DNA"/>
</dbReference>
<dbReference type="PIR" id="G65208">
    <property type="entry name" value="KIECID"/>
</dbReference>
<dbReference type="RefSeq" id="NP_418440.1">
    <property type="nucleotide sequence ID" value="NC_000913.3"/>
</dbReference>
<dbReference type="RefSeq" id="WP_001137220.1">
    <property type="nucleotide sequence ID" value="NZ_SSZK01000049.1"/>
</dbReference>
<dbReference type="PDB" id="6K5L">
    <property type="method" value="X-ray"/>
    <property type="resolution" value="2.55 A"/>
    <property type="chains" value="A/B=1-578"/>
</dbReference>
<dbReference type="PDBsum" id="6K5L"/>
<dbReference type="SMR" id="P11071"/>
<dbReference type="BioGRID" id="4261467">
    <property type="interactions" value="16"/>
</dbReference>
<dbReference type="BioGRID" id="849198">
    <property type="interactions" value="7"/>
</dbReference>
<dbReference type="DIP" id="DIP-9041N"/>
<dbReference type="FunCoup" id="P11071">
    <property type="interactions" value="40"/>
</dbReference>
<dbReference type="IntAct" id="P11071">
    <property type="interactions" value="12"/>
</dbReference>
<dbReference type="STRING" id="511145.b4016"/>
<dbReference type="jPOST" id="P11071"/>
<dbReference type="PaxDb" id="511145-b4016"/>
<dbReference type="DNASU" id="944797"/>
<dbReference type="EnsemblBacteria" id="AAC76986">
    <property type="protein sequence ID" value="AAC76986"/>
    <property type="gene ID" value="b4016"/>
</dbReference>
<dbReference type="GeneID" id="944797"/>
<dbReference type="KEGG" id="ecj:JW3976"/>
<dbReference type="KEGG" id="eco:b4016"/>
<dbReference type="KEGG" id="ecoc:C3026_21695"/>
<dbReference type="PATRIC" id="fig|1411691.4.peg.2697"/>
<dbReference type="EchoBASE" id="EB0025"/>
<dbReference type="eggNOG" id="COG4579">
    <property type="taxonomic scope" value="Bacteria"/>
</dbReference>
<dbReference type="HOGENOM" id="CLU_033804_1_1_6"/>
<dbReference type="InParanoid" id="P11071"/>
<dbReference type="OMA" id="EPWYSVG"/>
<dbReference type="OrthoDB" id="5287793at2"/>
<dbReference type="PhylomeDB" id="P11071"/>
<dbReference type="BioCyc" id="EcoCyc:ICITDEHASE-KIN-PHOSPHA"/>
<dbReference type="BioCyc" id="MetaCyc:ICITDEHASE-KIN-PHOSPHA"/>
<dbReference type="BRENDA" id="2.7.11.5">
    <property type="organism ID" value="2026"/>
</dbReference>
<dbReference type="SABIO-RK" id="P11071"/>
<dbReference type="PRO" id="PR:P11071"/>
<dbReference type="Proteomes" id="UP000000625">
    <property type="component" value="Chromosome"/>
</dbReference>
<dbReference type="GO" id="GO:0005737">
    <property type="term" value="C:cytoplasm"/>
    <property type="evidence" value="ECO:0000305"/>
    <property type="project" value="EcoliWiki"/>
</dbReference>
<dbReference type="GO" id="GO:0008772">
    <property type="term" value="F:[isocitrate dehydrogenase (NADP+)] kinase activity"/>
    <property type="evidence" value="ECO:0000314"/>
    <property type="project" value="EcoCyc"/>
</dbReference>
<dbReference type="GO" id="GO:0016208">
    <property type="term" value="F:AMP binding"/>
    <property type="evidence" value="ECO:0000314"/>
    <property type="project" value="EcoCyc"/>
</dbReference>
<dbReference type="GO" id="GO:0005524">
    <property type="term" value="F:ATP binding"/>
    <property type="evidence" value="ECO:0000314"/>
    <property type="project" value="EcoliWiki"/>
</dbReference>
<dbReference type="GO" id="GO:0000287">
    <property type="term" value="F:magnesium ion binding"/>
    <property type="evidence" value="ECO:0000314"/>
    <property type="project" value="EcoCyc"/>
</dbReference>
<dbReference type="GO" id="GO:0030145">
    <property type="term" value="F:manganese ion binding"/>
    <property type="evidence" value="ECO:0000314"/>
    <property type="project" value="EcoCyc"/>
</dbReference>
<dbReference type="GO" id="GO:0004721">
    <property type="term" value="F:phosphoprotein phosphatase activity"/>
    <property type="evidence" value="ECO:0000318"/>
    <property type="project" value="GO_Central"/>
</dbReference>
<dbReference type="GO" id="GO:0004674">
    <property type="term" value="F:protein serine/threonine kinase activity"/>
    <property type="evidence" value="ECO:0000314"/>
    <property type="project" value="EcoCyc"/>
</dbReference>
<dbReference type="GO" id="GO:0004722">
    <property type="term" value="F:protein serine/threonine phosphatase activity"/>
    <property type="evidence" value="ECO:0000314"/>
    <property type="project" value="EcoCyc"/>
</dbReference>
<dbReference type="GO" id="GO:0006006">
    <property type="term" value="P:glucose metabolic process"/>
    <property type="evidence" value="ECO:0007669"/>
    <property type="project" value="InterPro"/>
</dbReference>
<dbReference type="GO" id="GO:0006097">
    <property type="term" value="P:glyoxylate cycle"/>
    <property type="evidence" value="ECO:0000305"/>
    <property type="project" value="EcoliWiki"/>
</dbReference>
<dbReference type="GO" id="GO:0006099">
    <property type="term" value="P:tricarboxylic acid cycle"/>
    <property type="evidence" value="ECO:0000305"/>
    <property type="project" value="EcoliWiki"/>
</dbReference>
<dbReference type="HAMAP" id="MF_00747">
    <property type="entry name" value="AceK"/>
    <property type="match status" value="1"/>
</dbReference>
<dbReference type="InterPro" id="IPR046855">
    <property type="entry name" value="AceK_kinase"/>
</dbReference>
<dbReference type="InterPro" id="IPR046854">
    <property type="entry name" value="AceK_regulatory"/>
</dbReference>
<dbReference type="InterPro" id="IPR010452">
    <property type="entry name" value="Isocitrate_DH_AceK"/>
</dbReference>
<dbReference type="NCBIfam" id="NF002804">
    <property type="entry name" value="PRK02946.1"/>
    <property type="match status" value="1"/>
</dbReference>
<dbReference type="PANTHER" id="PTHR39559">
    <property type="match status" value="1"/>
</dbReference>
<dbReference type="PANTHER" id="PTHR39559:SF1">
    <property type="entry name" value="ISOCITRATE DEHYDROGENASE KINASE_PHOSPHATASE"/>
    <property type="match status" value="1"/>
</dbReference>
<dbReference type="Pfam" id="PF06315">
    <property type="entry name" value="AceK_kinase"/>
    <property type="match status" value="1"/>
</dbReference>
<dbReference type="Pfam" id="PF20423">
    <property type="entry name" value="AceK_regulatory"/>
    <property type="match status" value="1"/>
</dbReference>
<dbReference type="PIRSF" id="PIRSF000719">
    <property type="entry name" value="AceK"/>
    <property type="match status" value="1"/>
</dbReference>